<reference key="1">
    <citation type="journal article" date="2005" name="Nucleic Acids Res.">
        <title>Genome dynamics and diversity of Shigella species, the etiologic agents of bacillary dysentery.</title>
        <authorList>
            <person name="Yang F."/>
            <person name="Yang J."/>
            <person name="Zhang X."/>
            <person name="Chen L."/>
            <person name="Jiang Y."/>
            <person name="Yan Y."/>
            <person name="Tang X."/>
            <person name="Wang J."/>
            <person name="Xiong Z."/>
            <person name="Dong J."/>
            <person name="Xue Y."/>
            <person name="Zhu Y."/>
            <person name="Xu X."/>
            <person name="Sun L."/>
            <person name="Chen S."/>
            <person name="Nie H."/>
            <person name="Peng J."/>
            <person name="Xu J."/>
            <person name="Wang Y."/>
            <person name="Yuan Z."/>
            <person name="Wen Y."/>
            <person name="Yao Z."/>
            <person name="Shen Y."/>
            <person name="Qiang B."/>
            <person name="Hou Y."/>
            <person name="Yu J."/>
            <person name="Jin Q."/>
        </authorList>
    </citation>
    <scope>NUCLEOTIDE SEQUENCE [LARGE SCALE GENOMIC DNA]</scope>
    <source>
        <strain>Ss046</strain>
    </source>
</reference>
<protein>
    <recommendedName>
        <fullName evidence="1">Protein SprT</fullName>
    </recommendedName>
</protein>
<dbReference type="EMBL" id="CP000038">
    <property type="protein sequence ID" value="AAZ89685.1"/>
    <property type="molecule type" value="Genomic_DNA"/>
</dbReference>
<dbReference type="RefSeq" id="WP_005137173.1">
    <property type="nucleotide sequence ID" value="NC_007384.1"/>
</dbReference>
<dbReference type="SMR" id="Q3YXS7"/>
<dbReference type="KEGG" id="ssn:SSON_3098"/>
<dbReference type="HOGENOM" id="CLU_113336_0_1_6"/>
<dbReference type="Proteomes" id="UP000002529">
    <property type="component" value="Chromosome"/>
</dbReference>
<dbReference type="GO" id="GO:0005737">
    <property type="term" value="C:cytoplasm"/>
    <property type="evidence" value="ECO:0007669"/>
    <property type="project" value="UniProtKB-SubCell"/>
</dbReference>
<dbReference type="GO" id="GO:0008270">
    <property type="term" value="F:zinc ion binding"/>
    <property type="evidence" value="ECO:0007669"/>
    <property type="project" value="UniProtKB-UniRule"/>
</dbReference>
<dbReference type="GO" id="GO:0006950">
    <property type="term" value="P:response to stress"/>
    <property type="evidence" value="ECO:0007669"/>
    <property type="project" value="UniProtKB-ARBA"/>
</dbReference>
<dbReference type="Gene3D" id="3.30.2010.10">
    <property type="entry name" value="Metalloproteases ('zincins'), catalytic domain"/>
    <property type="match status" value="1"/>
</dbReference>
<dbReference type="HAMAP" id="MF_00746">
    <property type="entry name" value="SprT"/>
    <property type="match status" value="1"/>
</dbReference>
<dbReference type="InterPro" id="IPR006640">
    <property type="entry name" value="SprT-like_domain"/>
</dbReference>
<dbReference type="InterPro" id="IPR035240">
    <property type="entry name" value="SprT_Zn_ribbon"/>
</dbReference>
<dbReference type="InterPro" id="IPR023483">
    <property type="entry name" value="Uncharacterised_SprT"/>
</dbReference>
<dbReference type="NCBIfam" id="NF003421">
    <property type="entry name" value="PRK04860.1"/>
    <property type="match status" value="1"/>
</dbReference>
<dbReference type="PANTHER" id="PTHR38773">
    <property type="entry name" value="PROTEIN SPRT"/>
    <property type="match status" value="1"/>
</dbReference>
<dbReference type="PANTHER" id="PTHR38773:SF1">
    <property type="entry name" value="PROTEIN SPRT"/>
    <property type="match status" value="1"/>
</dbReference>
<dbReference type="Pfam" id="PF10263">
    <property type="entry name" value="SprT-like"/>
    <property type="match status" value="1"/>
</dbReference>
<dbReference type="Pfam" id="PF17283">
    <property type="entry name" value="Zn_ribbon_SprT"/>
    <property type="match status" value="1"/>
</dbReference>
<dbReference type="SMART" id="SM00731">
    <property type="entry name" value="SprT"/>
    <property type="match status" value="1"/>
</dbReference>
<dbReference type="PROSITE" id="PS00142">
    <property type="entry name" value="ZINC_PROTEASE"/>
    <property type="match status" value="1"/>
</dbReference>
<proteinExistence type="inferred from homology"/>
<keyword id="KW-0963">Cytoplasm</keyword>
<keyword id="KW-0479">Metal-binding</keyword>
<keyword id="KW-1185">Reference proteome</keyword>
<keyword id="KW-0862">Zinc</keyword>
<sequence>MKTSRLPIAIQQAVMRGLREKLAQANLKLGRNYPEPKLSYTQRGTSAGTAWLESYEIRLNPVLLLENSEAFIEEVVPHELAHLLVWKHFGRVAPHGKEWKWMMESVLGVPARRTHQFELQSVRRNTFPYRCKCQEHQLTVRRHNRVVRGEAVYRCVHCGEQLVAK</sequence>
<feature type="chain" id="PRO_1000046543" description="Protein SprT">
    <location>
        <begin position="1"/>
        <end position="165"/>
    </location>
</feature>
<feature type="domain" description="SprT-like" evidence="1">
    <location>
        <begin position="20"/>
        <end position="163"/>
    </location>
</feature>
<feature type="active site" evidence="1">
    <location>
        <position position="79"/>
    </location>
</feature>
<feature type="binding site" evidence="1">
    <location>
        <position position="78"/>
    </location>
    <ligand>
        <name>Zn(2+)</name>
        <dbReference type="ChEBI" id="CHEBI:29105"/>
    </ligand>
</feature>
<feature type="binding site" evidence="1">
    <location>
        <position position="82"/>
    </location>
    <ligand>
        <name>Zn(2+)</name>
        <dbReference type="ChEBI" id="CHEBI:29105"/>
    </ligand>
</feature>
<organism>
    <name type="scientific">Shigella sonnei (strain Ss046)</name>
    <dbReference type="NCBI Taxonomy" id="300269"/>
    <lineage>
        <taxon>Bacteria</taxon>
        <taxon>Pseudomonadati</taxon>
        <taxon>Pseudomonadota</taxon>
        <taxon>Gammaproteobacteria</taxon>
        <taxon>Enterobacterales</taxon>
        <taxon>Enterobacteriaceae</taxon>
        <taxon>Shigella</taxon>
    </lineage>
</organism>
<accession>Q3YXS7</accession>
<gene>
    <name evidence="1" type="primary">sprT</name>
    <name type="ordered locus">SSON_3098</name>
</gene>
<evidence type="ECO:0000255" key="1">
    <source>
        <dbReference type="HAMAP-Rule" id="MF_00746"/>
    </source>
</evidence>
<name>SPRT_SHISS</name>
<comment type="cofactor">
    <cofactor evidence="1">
        <name>Zn(2+)</name>
        <dbReference type="ChEBI" id="CHEBI:29105"/>
    </cofactor>
    <text evidence="1">Binds 1 zinc ion.</text>
</comment>
<comment type="subcellular location">
    <subcellularLocation>
        <location evidence="1">Cytoplasm</location>
    </subcellularLocation>
</comment>
<comment type="similarity">
    <text evidence="1">Belongs to the SprT family.</text>
</comment>